<reference key="1">
    <citation type="journal article" date="2007" name="Nat. Biotechnol.">
        <title>Genome sequence of the lignocellulose-bioconverting and xylose-fermenting yeast Pichia stipitis.</title>
        <authorList>
            <person name="Jeffries T.W."/>
            <person name="Grigoriev I.V."/>
            <person name="Grimwood J."/>
            <person name="Laplaza J.M."/>
            <person name="Aerts A."/>
            <person name="Salamov A."/>
            <person name="Schmutz J."/>
            <person name="Lindquist E."/>
            <person name="Dehal P."/>
            <person name="Shapiro H."/>
            <person name="Jin Y.-S."/>
            <person name="Passoth V."/>
            <person name="Richardson P.M."/>
        </authorList>
    </citation>
    <scope>NUCLEOTIDE SEQUENCE [LARGE SCALE GENOMIC DNA]</scope>
    <source>
        <strain>ATCC 58785 / CBS 6054 / NBRC 10063 / NRRL Y-11545</strain>
    </source>
</reference>
<evidence type="ECO:0000250" key="1"/>
<evidence type="ECO:0000256" key="2">
    <source>
        <dbReference type="SAM" id="MobiDB-lite"/>
    </source>
</evidence>
<evidence type="ECO:0000305" key="3"/>
<gene>
    <name type="primary">SEC24</name>
    <name type="ORF">PICST_88354</name>
</gene>
<sequence length="907" mass="99941">MSSKRRAYPQPSYTNGPGSQLGTPPVAGGFQQPNYGVDQLNQQFQGMNVDPNQAAVAGAPQAAAGSPYGYNQYQQPGANANAAHQSRAGNAAGASSYYLQQGNINAALPLNQLYTTDLSRELPPPISDLSLPPPPIVLPAGTTLIPNSETANAQPEYFRSTLNVIPTNSSLLKKSKLPLALVVKPYNALKVEQEDVPVTSDTTISRCRRCRGYINPFVTLAENGRRWRCNFCNLLNDIPSSFEYDEISGTVKNKFDRVELNNAVVEFIAPKEYMARAPQPIVYTFIIDVSINAVQSGLTGTITRTILESLDRIPNKTKTARVAFIGVDSNLHYFRFNEGLDGTEVLIVSDIDEPFLPSPDGLLVNLDENRQAVEKLLIDFPSYFEDTANQGFALGPALKSGHKMISHIGGKLVCFSATLPNIGEGKLSVRDEASVSGKPKEAKTLLSSADSFYKSFAVNCNSSQISVDLFLTSSSYQDVATLSNLPRFTAGQSHFYPAWTSAKNEDVTKLSKEVSDHLSQDIALEAVLRVRGSTGIRMSSFYGNFFNRSSDLCSFPTFPRDQSYVIEMSIEENINKPVVYFQAAVLHSTSFGERRIRVMNLAIPTSSKLNDIYASADQLAITNIFTHKAIETALSSSLPDARDFLVNKVVDILNVYKKELVAGNVSGASPLQLSTNLRMLPILLFSLTKHLGFRADRVPSDHRAAALNNLGSLPIPYLVKYIYPTVYALHTMPDECGLPEKLIQVNEETGEEEEVISTNIMLPEPINDSKSSWENYGLYLIDNSSELFLWVSGNVVPGLVQDLFGTDNLYAIPTGKTELPEFSDEESEFNFRVRQIIGKIRENNDSIVWKNLYVVVGGSSNEPIEISQQRDLMALRMWAYSCLVEDKTGSEPSYRDFLTNLKTKVSQ</sequence>
<feature type="chain" id="PRO_0000295496" description="Protein transport protein SEC24">
    <location>
        <begin position="1"/>
        <end position="907"/>
    </location>
</feature>
<feature type="region of interest" description="Disordered" evidence="2">
    <location>
        <begin position="1"/>
        <end position="34"/>
    </location>
</feature>
<feature type="region of interest" description="Zinc finger-like">
    <location>
        <begin position="207"/>
        <end position="232"/>
    </location>
</feature>
<feature type="compositionally biased region" description="Polar residues" evidence="2">
    <location>
        <begin position="11"/>
        <end position="22"/>
    </location>
</feature>
<feature type="binding site" evidence="1">
    <location>
        <position position="207"/>
    </location>
    <ligand>
        <name>Zn(2+)</name>
        <dbReference type="ChEBI" id="CHEBI:29105"/>
    </ligand>
</feature>
<feature type="binding site" evidence="1">
    <location>
        <position position="210"/>
    </location>
    <ligand>
        <name>Zn(2+)</name>
        <dbReference type="ChEBI" id="CHEBI:29105"/>
    </ligand>
</feature>
<feature type="binding site" evidence="1">
    <location>
        <position position="229"/>
    </location>
    <ligand>
        <name>Zn(2+)</name>
        <dbReference type="ChEBI" id="CHEBI:29105"/>
    </ligand>
</feature>
<feature type="binding site" evidence="1">
    <location>
        <position position="232"/>
    </location>
    <ligand>
        <name>Zn(2+)</name>
        <dbReference type="ChEBI" id="CHEBI:29105"/>
    </ligand>
</feature>
<organism>
    <name type="scientific">Scheffersomyces stipitis (strain ATCC 58785 / CBS 6054 / NBRC 10063 / NRRL Y-11545)</name>
    <name type="common">Yeast</name>
    <name type="synonym">Pichia stipitis</name>
    <dbReference type="NCBI Taxonomy" id="322104"/>
    <lineage>
        <taxon>Eukaryota</taxon>
        <taxon>Fungi</taxon>
        <taxon>Dikarya</taxon>
        <taxon>Ascomycota</taxon>
        <taxon>Saccharomycotina</taxon>
        <taxon>Pichiomycetes</taxon>
        <taxon>Debaryomycetaceae</taxon>
        <taxon>Scheffersomyces</taxon>
    </lineage>
</organism>
<accession>A3LRW3</accession>
<proteinExistence type="inferred from homology"/>
<comment type="function">
    <text evidence="1">Component of the coat protein complex II (COPII) which promotes the formation of transport vesicles from the endoplasmic reticulum (ER). The coat has two main functions, the physical deformation of the endoplasmic reticulum membrane into vesicles and the selection of cargo molecules (By similarity).</text>
</comment>
<comment type="subunit">
    <text evidence="1">The COPII coat is composed of at least 5 proteins: the SEC23/24 complex, the SEC13/31 complex, and the protein SAR1. Golgi apparatus membrane; Peripheral membrane protein; Cytoplasmic side.</text>
</comment>
<comment type="subcellular location">
    <subcellularLocation>
        <location evidence="1">Cytoplasm</location>
    </subcellularLocation>
    <subcellularLocation>
        <location evidence="1">Cytoplasmic vesicle</location>
        <location evidence="1">COPII-coated vesicle membrane</location>
        <topology evidence="1">Peripheral membrane protein</topology>
        <orientation evidence="1">Cytoplasmic side</orientation>
    </subcellularLocation>
    <subcellularLocation>
        <location evidence="1">Endoplasmic reticulum membrane</location>
        <topology evidence="1">Peripheral membrane protein</topology>
        <orientation evidence="1">Cytoplasmic side</orientation>
    </subcellularLocation>
    <subcellularLocation>
        <location evidence="1">Golgi apparatus membrane</location>
        <topology evidence="1">Peripheral membrane protein</topology>
        <orientation evidence="1">Cytoplasmic side</orientation>
    </subcellularLocation>
</comment>
<comment type="similarity">
    <text evidence="3">Belongs to the SEC23/SEC24 family. SEC24 subfamily.</text>
</comment>
<dbReference type="EMBL" id="CP000497">
    <property type="protein sequence ID" value="ABN65461.2"/>
    <property type="molecule type" value="Genomic_DNA"/>
</dbReference>
<dbReference type="RefSeq" id="XP_001383490.2">
    <property type="nucleotide sequence ID" value="XM_001383453.1"/>
</dbReference>
<dbReference type="SMR" id="A3LRW3"/>
<dbReference type="FunCoup" id="A3LRW3">
    <property type="interactions" value="889"/>
</dbReference>
<dbReference type="STRING" id="322104.A3LRW3"/>
<dbReference type="GeneID" id="4837868"/>
<dbReference type="KEGG" id="pic:PICST_88354"/>
<dbReference type="eggNOG" id="KOG1985">
    <property type="taxonomic scope" value="Eukaryota"/>
</dbReference>
<dbReference type="HOGENOM" id="CLU_004589_2_1_1"/>
<dbReference type="InParanoid" id="A3LRW3"/>
<dbReference type="OMA" id="AVECSKQ"/>
<dbReference type="OrthoDB" id="49016at2759"/>
<dbReference type="Proteomes" id="UP000002258">
    <property type="component" value="Chromosome 3"/>
</dbReference>
<dbReference type="GO" id="GO:0005801">
    <property type="term" value="C:cis-Golgi network"/>
    <property type="evidence" value="ECO:0007669"/>
    <property type="project" value="EnsemblFungi"/>
</dbReference>
<dbReference type="GO" id="GO:0030127">
    <property type="term" value="C:COPII vesicle coat"/>
    <property type="evidence" value="ECO:0007669"/>
    <property type="project" value="InterPro"/>
</dbReference>
<dbReference type="GO" id="GO:0070971">
    <property type="term" value="C:endoplasmic reticulum exit site"/>
    <property type="evidence" value="ECO:0007669"/>
    <property type="project" value="EnsemblFungi"/>
</dbReference>
<dbReference type="GO" id="GO:0005789">
    <property type="term" value="C:endoplasmic reticulum membrane"/>
    <property type="evidence" value="ECO:0007669"/>
    <property type="project" value="UniProtKB-SubCell"/>
</dbReference>
<dbReference type="GO" id="GO:1990753">
    <property type="term" value="C:equatorial cell cortex"/>
    <property type="evidence" value="ECO:0007669"/>
    <property type="project" value="EnsemblFungi"/>
</dbReference>
<dbReference type="GO" id="GO:0000139">
    <property type="term" value="C:Golgi membrane"/>
    <property type="evidence" value="ECO:0007669"/>
    <property type="project" value="UniProtKB-SubCell"/>
</dbReference>
<dbReference type="GO" id="GO:0000149">
    <property type="term" value="F:SNARE binding"/>
    <property type="evidence" value="ECO:0007669"/>
    <property type="project" value="TreeGrafter"/>
</dbReference>
<dbReference type="GO" id="GO:0008270">
    <property type="term" value="F:zinc ion binding"/>
    <property type="evidence" value="ECO:0007669"/>
    <property type="project" value="InterPro"/>
</dbReference>
<dbReference type="GO" id="GO:0090110">
    <property type="term" value="P:COPII-coated vesicle cargo loading"/>
    <property type="evidence" value="ECO:0007669"/>
    <property type="project" value="TreeGrafter"/>
</dbReference>
<dbReference type="GO" id="GO:0006886">
    <property type="term" value="P:intracellular protein transport"/>
    <property type="evidence" value="ECO:0007669"/>
    <property type="project" value="InterPro"/>
</dbReference>
<dbReference type="Gene3D" id="2.60.40.1670">
    <property type="entry name" value="beta-sandwich domain of Sec23/24"/>
    <property type="match status" value="1"/>
</dbReference>
<dbReference type="Gene3D" id="1.20.120.730">
    <property type="entry name" value="Sec23/Sec24 helical domain"/>
    <property type="match status" value="1"/>
</dbReference>
<dbReference type="Gene3D" id="3.40.20.10">
    <property type="entry name" value="Severin"/>
    <property type="match status" value="1"/>
</dbReference>
<dbReference type="Gene3D" id="3.40.50.410">
    <property type="entry name" value="von Willebrand factor, type A domain"/>
    <property type="match status" value="1"/>
</dbReference>
<dbReference type="Gene3D" id="2.30.30.380">
    <property type="entry name" value="Zn-finger domain of Sec23/24"/>
    <property type="match status" value="1"/>
</dbReference>
<dbReference type="InterPro" id="IPR029006">
    <property type="entry name" value="ADF-H/Gelsolin-like_dom_sf"/>
</dbReference>
<dbReference type="InterPro" id="IPR007123">
    <property type="entry name" value="Gelsolin-like_dom"/>
</dbReference>
<dbReference type="InterPro" id="IPR036180">
    <property type="entry name" value="Gelsolin-like_dom_sf"/>
</dbReference>
<dbReference type="InterPro" id="IPR006900">
    <property type="entry name" value="Sec23/24_helical_dom"/>
</dbReference>
<dbReference type="InterPro" id="IPR036175">
    <property type="entry name" value="Sec23/24_helical_dom_sf"/>
</dbReference>
<dbReference type="InterPro" id="IPR006896">
    <property type="entry name" value="Sec23/24_trunk_dom"/>
</dbReference>
<dbReference type="InterPro" id="IPR012990">
    <property type="entry name" value="Sec23_24_beta_S"/>
</dbReference>
<dbReference type="InterPro" id="IPR050550">
    <property type="entry name" value="SEC23_SEC24_subfamily"/>
</dbReference>
<dbReference type="InterPro" id="IPR036465">
    <property type="entry name" value="vWFA_dom_sf"/>
</dbReference>
<dbReference type="InterPro" id="IPR006895">
    <property type="entry name" value="Znf_Sec23_Sec24"/>
</dbReference>
<dbReference type="InterPro" id="IPR036174">
    <property type="entry name" value="Znf_Sec23_Sec24_sf"/>
</dbReference>
<dbReference type="PANTHER" id="PTHR13803">
    <property type="entry name" value="SEC24-RELATED PROTEIN"/>
    <property type="match status" value="1"/>
</dbReference>
<dbReference type="PANTHER" id="PTHR13803:SF39">
    <property type="entry name" value="SECRETORY 24AB, ISOFORM A"/>
    <property type="match status" value="1"/>
</dbReference>
<dbReference type="Pfam" id="PF00626">
    <property type="entry name" value="Gelsolin"/>
    <property type="match status" value="1"/>
</dbReference>
<dbReference type="Pfam" id="PF08033">
    <property type="entry name" value="Sec23_BS"/>
    <property type="match status" value="1"/>
</dbReference>
<dbReference type="Pfam" id="PF04815">
    <property type="entry name" value="Sec23_helical"/>
    <property type="match status" value="1"/>
</dbReference>
<dbReference type="Pfam" id="PF04811">
    <property type="entry name" value="Sec23_trunk"/>
    <property type="match status" value="1"/>
</dbReference>
<dbReference type="Pfam" id="PF04810">
    <property type="entry name" value="zf-Sec23_Sec24"/>
    <property type="match status" value="1"/>
</dbReference>
<dbReference type="SUPFAM" id="SSF81995">
    <property type="entry name" value="beta-sandwich domain of Sec23/24"/>
    <property type="match status" value="1"/>
</dbReference>
<dbReference type="SUPFAM" id="SSF82754">
    <property type="entry name" value="C-terminal, gelsolin-like domain of Sec23/24"/>
    <property type="match status" value="1"/>
</dbReference>
<dbReference type="SUPFAM" id="SSF81811">
    <property type="entry name" value="Helical domain of Sec23/24"/>
    <property type="match status" value="1"/>
</dbReference>
<dbReference type="SUPFAM" id="SSF53300">
    <property type="entry name" value="vWA-like"/>
    <property type="match status" value="1"/>
</dbReference>
<dbReference type="SUPFAM" id="SSF82919">
    <property type="entry name" value="Zn-finger domain of Sec23/24"/>
    <property type="match status" value="1"/>
</dbReference>
<keyword id="KW-0963">Cytoplasm</keyword>
<keyword id="KW-0968">Cytoplasmic vesicle</keyword>
<keyword id="KW-0256">Endoplasmic reticulum</keyword>
<keyword id="KW-0931">ER-Golgi transport</keyword>
<keyword id="KW-0333">Golgi apparatus</keyword>
<keyword id="KW-0472">Membrane</keyword>
<keyword id="KW-0479">Metal-binding</keyword>
<keyword id="KW-0653">Protein transport</keyword>
<keyword id="KW-1185">Reference proteome</keyword>
<keyword id="KW-0813">Transport</keyword>
<keyword id="KW-0862">Zinc</keyword>
<protein>
    <recommendedName>
        <fullName>Protein transport protein SEC24</fullName>
    </recommendedName>
</protein>
<name>SEC24_PICST</name>